<comment type="function">
    <text evidence="1">Could be a mediator in iron transactions between iron acquisition and iron-requiring processes, such as synthesis and/or repair of Fe-S clusters in biosynthetic enzymes.</text>
</comment>
<comment type="subunit">
    <text evidence="1">Monomer.</text>
</comment>
<comment type="similarity">
    <text evidence="1">Belongs to the Fe(2+)-trafficking protein family.</text>
</comment>
<organism>
    <name type="scientific">Pectobacterium carotovorum subsp. carotovorum (strain PC1)</name>
    <dbReference type="NCBI Taxonomy" id="561230"/>
    <lineage>
        <taxon>Bacteria</taxon>
        <taxon>Pseudomonadati</taxon>
        <taxon>Pseudomonadota</taxon>
        <taxon>Gammaproteobacteria</taxon>
        <taxon>Enterobacterales</taxon>
        <taxon>Pectobacteriaceae</taxon>
        <taxon>Pectobacterium</taxon>
    </lineage>
</organism>
<evidence type="ECO:0000255" key="1">
    <source>
        <dbReference type="HAMAP-Rule" id="MF_00686"/>
    </source>
</evidence>
<protein>
    <recommendedName>
        <fullName evidence="1">Probable Fe(2+)-trafficking protein</fullName>
    </recommendedName>
</protein>
<dbReference type="EMBL" id="CP001657">
    <property type="protein sequence ID" value="ACT11931.1"/>
    <property type="molecule type" value="Genomic_DNA"/>
</dbReference>
<dbReference type="RefSeq" id="WP_005975842.1">
    <property type="nucleotide sequence ID" value="NC_012917.1"/>
</dbReference>
<dbReference type="SMR" id="C6DAC3"/>
<dbReference type="STRING" id="561230.PC1_0881"/>
<dbReference type="KEGG" id="pct:PC1_0881"/>
<dbReference type="eggNOG" id="COG2924">
    <property type="taxonomic scope" value="Bacteria"/>
</dbReference>
<dbReference type="HOGENOM" id="CLU_170994_0_0_6"/>
<dbReference type="OrthoDB" id="9804318at2"/>
<dbReference type="Proteomes" id="UP000002736">
    <property type="component" value="Chromosome"/>
</dbReference>
<dbReference type="GO" id="GO:0005829">
    <property type="term" value="C:cytosol"/>
    <property type="evidence" value="ECO:0007669"/>
    <property type="project" value="TreeGrafter"/>
</dbReference>
<dbReference type="GO" id="GO:0005506">
    <property type="term" value="F:iron ion binding"/>
    <property type="evidence" value="ECO:0007669"/>
    <property type="project" value="UniProtKB-UniRule"/>
</dbReference>
<dbReference type="GO" id="GO:0034599">
    <property type="term" value="P:cellular response to oxidative stress"/>
    <property type="evidence" value="ECO:0007669"/>
    <property type="project" value="TreeGrafter"/>
</dbReference>
<dbReference type="FunFam" id="1.10.3880.10:FF:000001">
    <property type="entry name" value="Probable Fe(2+)-trafficking protein"/>
    <property type="match status" value="1"/>
</dbReference>
<dbReference type="Gene3D" id="1.10.3880.10">
    <property type="entry name" value="Fe(II) trafficking protein YggX"/>
    <property type="match status" value="1"/>
</dbReference>
<dbReference type="HAMAP" id="MF_00686">
    <property type="entry name" value="Fe_traffic_YggX"/>
    <property type="match status" value="1"/>
</dbReference>
<dbReference type="InterPro" id="IPR007457">
    <property type="entry name" value="Fe_traffick_prot_YggX"/>
</dbReference>
<dbReference type="InterPro" id="IPR036766">
    <property type="entry name" value="Fe_traffick_prot_YggX_sf"/>
</dbReference>
<dbReference type="NCBIfam" id="NF003817">
    <property type="entry name" value="PRK05408.1"/>
    <property type="match status" value="1"/>
</dbReference>
<dbReference type="PANTHER" id="PTHR36965">
    <property type="entry name" value="FE(2+)-TRAFFICKING PROTEIN-RELATED"/>
    <property type="match status" value="1"/>
</dbReference>
<dbReference type="PANTHER" id="PTHR36965:SF1">
    <property type="entry name" value="FE(2+)-TRAFFICKING PROTEIN-RELATED"/>
    <property type="match status" value="1"/>
</dbReference>
<dbReference type="Pfam" id="PF04362">
    <property type="entry name" value="Iron_traffic"/>
    <property type="match status" value="1"/>
</dbReference>
<dbReference type="PIRSF" id="PIRSF029827">
    <property type="entry name" value="Fe_traffic_YggX"/>
    <property type="match status" value="1"/>
</dbReference>
<dbReference type="SUPFAM" id="SSF111148">
    <property type="entry name" value="YggX-like"/>
    <property type="match status" value="1"/>
</dbReference>
<sequence>MSRTIFCTFLQRDAEGQDFQLYPGDLGKRIYNEISKEAWAQWQTKQTMLINEKKLSMMNVDDRKLLEQEMIKFLFEGKDVHIEGYTPPSH</sequence>
<accession>C6DAC3</accession>
<proteinExistence type="inferred from homology"/>
<reference key="1">
    <citation type="submission" date="2009-07" db="EMBL/GenBank/DDBJ databases">
        <title>Complete sequence of Pectobacterium carotovorum subsp. carotovorum PC1.</title>
        <authorList>
            <consortium name="US DOE Joint Genome Institute"/>
            <person name="Lucas S."/>
            <person name="Copeland A."/>
            <person name="Lapidus A."/>
            <person name="Glavina del Rio T."/>
            <person name="Tice H."/>
            <person name="Bruce D."/>
            <person name="Goodwin L."/>
            <person name="Pitluck S."/>
            <person name="Munk A.C."/>
            <person name="Brettin T."/>
            <person name="Detter J.C."/>
            <person name="Han C."/>
            <person name="Tapia R."/>
            <person name="Larimer F."/>
            <person name="Land M."/>
            <person name="Hauser L."/>
            <person name="Kyrpides N."/>
            <person name="Mikhailova N."/>
            <person name="Balakrishnan V."/>
            <person name="Glasner J."/>
            <person name="Perna N.T."/>
        </authorList>
    </citation>
    <scope>NUCLEOTIDE SEQUENCE [LARGE SCALE GENOMIC DNA]</scope>
    <source>
        <strain>PC1</strain>
    </source>
</reference>
<gene>
    <name type="ordered locus">PC1_0881</name>
</gene>
<name>FETP_PECCP</name>
<keyword id="KW-0408">Iron</keyword>
<feature type="chain" id="PRO_1000212555" description="Probable Fe(2+)-trafficking protein">
    <location>
        <begin position="1"/>
        <end position="90"/>
    </location>
</feature>